<protein>
    <recommendedName>
        <fullName evidence="1">DNA-directed RNA polymerase subunit Rpo11</fullName>
        <ecNumber evidence="1">2.7.7.6</ecNumber>
    </recommendedName>
    <alternativeName>
        <fullName evidence="1">DNA-directed RNA polymerase subunit L</fullName>
    </alternativeName>
</protein>
<sequence length="95" mass="11051">MKIEVIKRDKNLLEFYLVGEDHTFANLLSETLHENKHVTFAAYTIEHPVLMARKPRFRISTDGKITPEKALEEAAQKIFDRAKDVLEVWEGVIKK</sequence>
<feature type="chain" id="PRO_1000204675" description="DNA-directed RNA polymerase subunit Rpo11">
    <location>
        <begin position="1"/>
        <end position="95"/>
    </location>
</feature>
<organism>
    <name type="scientific">Thermococcus sibiricus (strain DSM 12597 / MM 739)</name>
    <dbReference type="NCBI Taxonomy" id="604354"/>
    <lineage>
        <taxon>Archaea</taxon>
        <taxon>Methanobacteriati</taxon>
        <taxon>Methanobacteriota</taxon>
        <taxon>Thermococci</taxon>
        <taxon>Thermococcales</taxon>
        <taxon>Thermococcaceae</taxon>
        <taxon>Thermococcus</taxon>
    </lineage>
</organism>
<keyword id="KW-0963">Cytoplasm</keyword>
<keyword id="KW-0240">DNA-directed RNA polymerase</keyword>
<keyword id="KW-0548">Nucleotidyltransferase</keyword>
<keyword id="KW-1185">Reference proteome</keyword>
<keyword id="KW-0804">Transcription</keyword>
<keyword id="KW-0808">Transferase</keyword>
<reference key="1">
    <citation type="journal article" date="2009" name="Appl. Environ. Microbiol.">
        <title>Metabolic versatility and indigenous origin of the archaeon Thermococcus sibiricus, isolated from a siberian oil reservoir, as revealed by genome analysis.</title>
        <authorList>
            <person name="Mardanov A.V."/>
            <person name="Ravin N.V."/>
            <person name="Svetlitchnyi V.A."/>
            <person name="Beletsky A.V."/>
            <person name="Miroshnichenko M.L."/>
            <person name="Bonch-Osmolovskaya E.A."/>
            <person name="Skryabin K.G."/>
        </authorList>
    </citation>
    <scope>NUCLEOTIDE SEQUENCE [LARGE SCALE GENOMIC DNA]</scope>
    <source>
        <strain>DSM 12597 / MM 739</strain>
    </source>
</reference>
<gene>
    <name evidence="1" type="primary">rpo11</name>
    <name evidence="1" type="synonym">rpoL</name>
    <name type="ordered locus">TSIB_0494</name>
</gene>
<proteinExistence type="inferred from homology"/>
<evidence type="ECO:0000255" key="1">
    <source>
        <dbReference type="HAMAP-Rule" id="MF_00261"/>
    </source>
</evidence>
<accession>C6A1R5</accession>
<name>RPO11_THESM</name>
<comment type="function">
    <text evidence="1">DNA-dependent RNA polymerase (RNAP) catalyzes the transcription of DNA into RNA using the four ribonucleoside triphosphates as substrates.</text>
</comment>
<comment type="catalytic activity">
    <reaction evidence="1">
        <text>RNA(n) + a ribonucleoside 5'-triphosphate = RNA(n+1) + diphosphate</text>
        <dbReference type="Rhea" id="RHEA:21248"/>
        <dbReference type="Rhea" id="RHEA-COMP:14527"/>
        <dbReference type="Rhea" id="RHEA-COMP:17342"/>
        <dbReference type="ChEBI" id="CHEBI:33019"/>
        <dbReference type="ChEBI" id="CHEBI:61557"/>
        <dbReference type="ChEBI" id="CHEBI:140395"/>
        <dbReference type="EC" id="2.7.7.6"/>
    </reaction>
</comment>
<comment type="subunit">
    <text evidence="1">Part of the RNA polymerase complex.</text>
</comment>
<comment type="subcellular location">
    <subcellularLocation>
        <location evidence="1">Cytoplasm</location>
    </subcellularLocation>
</comment>
<comment type="similarity">
    <text evidence="1">Belongs to the archaeal Rpo11/eukaryotic RPB11/RPC19 RNA polymerase subunit family.</text>
</comment>
<dbReference type="EC" id="2.7.7.6" evidence="1"/>
<dbReference type="EMBL" id="CP001463">
    <property type="protein sequence ID" value="ACS89560.1"/>
    <property type="molecule type" value="Genomic_DNA"/>
</dbReference>
<dbReference type="RefSeq" id="WP_015848780.1">
    <property type="nucleotide sequence ID" value="NC_012883.1"/>
</dbReference>
<dbReference type="SMR" id="C6A1R5"/>
<dbReference type="STRING" id="604354.TSIB_0494"/>
<dbReference type="GeneID" id="8095481"/>
<dbReference type="KEGG" id="tsi:TSIB_0494"/>
<dbReference type="eggNOG" id="arCOG04111">
    <property type="taxonomic scope" value="Archaea"/>
</dbReference>
<dbReference type="HOGENOM" id="CLU_090381_5_0_2"/>
<dbReference type="OrthoDB" id="24205at2157"/>
<dbReference type="Proteomes" id="UP000009079">
    <property type="component" value="Chromosome"/>
</dbReference>
<dbReference type="GO" id="GO:0005737">
    <property type="term" value="C:cytoplasm"/>
    <property type="evidence" value="ECO:0007669"/>
    <property type="project" value="UniProtKB-SubCell"/>
</dbReference>
<dbReference type="GO" id="GO:0000428">
    <property type="term" value="C:DNA-directed RNA polymerase complex"/>
    <property type="evidence" value="ECO:0007669"/>
    <property type="project" value="UniProtKB-KW"/>
</dbReference>
<dbReference type="GO" id="GO:0003677">
    <property type="term" value="F:DNA binding"/>
    <property type="evidence" value="ECO:0007669"/>
    <property type="project" value="InterPro"/>
</dbReference>
<dbReference type="GO" id="GO:0003899">
    <property type="term" value="F:DNA-directed RNA polymerase activity"/>
    <property type="evidence" value="ECO:0007669"/>
    <property type="project" value="UniProtKB-UniRule"/>
</dbReference>
<dbReference type="GO" id="GO:0046983">
    <property type="term" value="F:protein dimerization activity"/>
    <property type="evidence" value="ECO:0007669"/>
    <property type="project" value="InterPro"/>
</dbReference>
<dbReference type="GO" id="GO:0006351">
    <property type="term" value="P:DNA-templated transcription"/>
    <property type="evidence" value="ECO:0007669"/>
    <property type="project" value="UniProtKB-UniRule"/>
</dbReference>
<dbReference type="CDD" id="cd06927">
    <property type="entry name" value="RNAP_L"/>
    <property type="match status" value="1"/>
</dbReference>
<dbReference type="Gene3D" id="3.30.1360.10">
    <property type="entry name" value="RNA polymerase, RBP11-like subunit"/>
    <property type="match status" value="1"/>
</dbReference>
<dbReference type="HAMAP" id="MF_00261">
    <property type="entry name" value="RNApol_arch_Rpo11"/>
    <property type="match status" value="1"/>
</dbReference>
<dbReference type="InterPro" id="IPR036603">
    <property type="entry name" value="RBP11-like"/>
</dbReference>
<dbReference type="InterPro" id="IPR009025">
    <property type="entry name" value="RBP11-like_dimer"/>
</dbReference>
<dbReference type="InterPro" id="IPR008193">
    <property type="entry name" value="RNA_pol_Rpb11_13-16kDa_CS"/>
</dbReference>
<dbReference type="InterPro" id="IPR022905">
    <property type="entry name" value="Rpo11-like"/>
</dbReference>
<dbReference type="NCBIfam" id="NF002235">
    <property type="entry name" value="PRK01146.1-3"/>
    <property type="match status" value="1"/>
</dbReference>
<dbReference type="PANTHER" id="PTHR13946">
    <property type="entry name" value="DNA-DIRECTED RNA POLYMERASE I,II,III"/>
    <property type="match status" value="1"/>
</dbReference>
<dbReference type="PANTHER" id="PTHR13946:SF28">
    <property type="entry name" value="DNA-DIRECTED RNA POLYMERASES I AND III SUBUNIT RPAC2"/>
    <property type="match status" value="1"/>
</dbReference>
<dbReference type="Pfam" id="PF13656">
    <property type="entry name" value="RNA_pol_L_2"/>
    <property type="match status" value="1"/>
</dbReference>
<dbReference type="SUPFAM" id="SSF55257">
    <property type="entry name" value="RBP11-like subunits of RNA polymerase"/>
    <property type="match status" value="1"/>
</dbReference>
<dbReference type="PROSITE" id="PS01154">
    <property type="entry name" value="RNA_POL_L_13KD"/>
    <property type="match status" value="1"/>
</dbReference>